<organism>
    <name type="scientific">Candida albicans (strain SC5314 / ATCC MYA-2876)</name>
    <name type="common">Yeast</name>
    <dbReference type="NCBI Taxonomy" id="237561"/>
    <lineage>
        <taxon>Eukaryota</taxon>
        <taxon>Fungi</taxon>
        <taxon>Dikarya</taxon>
        <taxon>Ascomycota</taxon>
        <taxon>Saccharomycotina</taxon>
        <taxon>Pichiomycetes</taxon>
        <taxon>Debaryomycetaceae</taxon>
        <taxon>Candida/Lodderomyces clade</taxon>
        <taxon>Candida</taxon>
    </lineage>
</organism>
<evidence type="ECO:0000250" key="1"/>
<evidence type="ECO:0000255" key="2">
    <source>
        <dbReference type="PROSITE-ProRule" id="PRU00269"/>
    </source>
</evidence>
<evidence type="ECO:0000255" key="3">
    <source>
        <dbReference type="PROSITE-ProRule" id="PRU00534"/>
    </source>
</evidence>
<evidence type="ECO:0000255" key="4">
    <source>
        <dbReference type="PROSITE-ProRule" id="PRU00535"/>
    </source>
</evidence>
<evidence type="ECO:0000305" key="5"/>
<sequence length="2325" mass="266545">MTSNQSISTTELLQFLTDIETNIDDHETDFRKLLLYLLRFTNEKLIVIAQEENKTPTELQLLSKLIDTIELVLSKKTPLLSTLLTIEDVNIIHTTGSGSLVYEVPLHEWCISFALSHIPNFVSHTAGLNQLKRLVFLIVNLVSTQLHSFKVIKSTRIHLLKTLDDNLNFCLQNLLSANTFLFKSKLTTAVNLFSIVHDYDISQKLSLNLNNYQLKFESCSRKIWFILNEISLVSELDNLNLLDCLKSVFILDQSSALVLNVSVGWNQIGFLLSCIVEYLQQDFRTLDSNTNNFEFVNLNRSISLSLLNVYIVCFDKDLLENFMSFSNIKGILSKLIYDDSIPSVIRKTLNIVQYTYQLMSNPDGDDIKLYSTSVYNDYVWTPFVDSELESLRARLLDLQGNHEDSRKEELLSFSIDETHKLAKSTNSLNYTDEKAWIRTVKKLIGIDKNVLEDETTLYTLVTALSHYPCILKGDYDYTINECTKCGFGPLTKNNYSSIDPNRFPLNYSTEATTLQDIIQQFLIPKLETQQDPLLCCNTLLLIFNFYASFSPMADMQDHNILDFLLRLLATNDNRDVRMLVARILPLYLIQSKDDKLLDETFKYIFQKVTSIDFSSQHRLHFGESTIRAVVELATVSTGERLCAIYFKLVDWLGEQNEQHSNYVYCGILNLASAKSLPPHKLLSPYLPSVAEIIIKKPQVFERIIKVSMVTKNYFLNRTKEYTVPRILEYYKDPTLLTQIANAAGLEVGKLLANCLPRILATYLTKESVNERYIMKVLSSVCPDYKMIHTEELFTRIGDITWYILLEIQMDEFGNIRNLANITRALECVCKNVSLRKNGSELTKNNSINDLIEDQVLLLVQKFSDVTHSSRGAKPYLELKNSFYAIEFLIKGHIDAITSALGQLSTCLQATLEEPNFHVLSLRCWNELIKKVPPSHLISLIDIIISIILQKFESFGSEAKSIAIEILRKIYEEIKDKYNRYSLYFLSLPFLSYMEDYQMVKEFRNMKSPSRAMIFSEFTRRLQTSNMYVVKHALFDLSNYFEKYQINCQKDLFKDPGLTPAITSLVRTILDTAAKFKNKDTTVSTACAKALAIIGALDSNKFQFKTVKSLIIISSDFEDIEENSTFLVDLIENHLLKIFWASNDPHKQLFAAYVMQSFLAVMGLDERVLNTKDNRVWNKFTDVAKSTLTPFLKSKYAAPKPKLDNLKFPFFKLGMKYETWLVDVTLFLLKRASIDNGKGNQKAKTRKLIFQSYAVLIQREHDIPLCEHLLRYVALSHVINEGVPEDLHKEFLHILKMDSKSTSPDRAEQLKLCYQTIFSVLDYFNQWVSNMRVVTSNSGSELTSSDIRHKMDAVAKFSSFPQDLLTTRSAECDAYERTIMYLENCYRDSQSEKSFKLSNLNGAATLQDMYAHIDDYDALNGTLKMFSTNNLNEKLTTFQYSDSWSLAHESFEALGSTKNSVSNNTKLLQSLNEHGLYNEVLSTLSARTDSNDLKSIPLDWSLMGLHAAVYKGDSKQLEKWLQVINSIGKPHDMETMINYELAKALSFLFQSRIDMFKGSMDKLYNIIGCSLVPSVSSNFTRNITLMNQLHAIYDVSLIVLSKDSEDTLDLRIGNVDQDFDTQRNILTLHNVANTVMKNPAMISKNLLRESSLARKYNRLDISTRSIVQAMSLEDDQANIEFAELQWAQGKQSEAIKCLFDILKDNKFHDDKSKAKVQLQYANWLDESNHLSAHQIITEYNKAFHLNMVDEKCNFDIGKYYNKLMESSNDESGEYEHLTVRNYIRAVSVGTTYIFEALPKVLTIWLDFADKSNKSNAAENRLKQIIDDLYNAIANVPNYSWYTVLTQILSRIVHEHEPSFKVLKRIVQNVTLEYPKHCVWYIFSHARSSDKVRKRRVRELLNQVCTQDGNDTLPKSTMAAGNLFAKLIKIAELKIPKTNRKRQMSLLQDFEVDLSEPIDDLVIPIQSNLQIQIPSHLNSKHKGFSRSSSISFDGFDDNVNIFFSLQMPRQLTVRGSDGNAYRLMVKSDDTRKDAKVVEFTTMVNRILSTSTEARKRGLQIANYSVVPLSDHFGIIEFVMNVQTMKGVISEQRKRQGIPINERKVFMHIDSLQKAKKKDSKQLDKLVAGFRAIMDRCPPVLHTWFVEQFSDPSAWYMARNAFTRSSAVMSMVGYIMGLGDRHCENILIFKNTGAVLHIDFDCLFEKGTTLPTPEIVPFRLTQNMVDAMGITGVDGIYRITCEVTGTLLRENEQILMNILETLIYDPLIDWRNHNPREDLSKVRKKIRGLINEDEGLPMNIHGQVDVLIQEATSLERLSQMYAGWAAYM</sequence>
<name>ATR_CANAL</name>
<dbReference type="EC" id="2.7.11.1"/>
<dbReference type="EMBL" id="CP017627">
    <property type="protein sequence ID" value="AOW29815.1"/>
    <property type="molecule type" value="Genomic_DNA"/>
</dbReference>
<dbReference type="RefSeq" id="XP_710664.2">
    <property type="nucleotide sequence ID" value="XM_705572.2"/>
</dbReference>
<dbReference type="SMR" id="Q59LR2"/>
<dbReference type="FunCoup" id="Q59LR2">
    <property type="interactions" value="1260"/>
</dbReference>
<dbReference type="STRING" id="237561.Q59LR2"/>
<dbReference type="EnsemblFungi" id="C5_04060C_A-T">
    <property type="protein sequence ID" value="C5_04060C_A-T-p1"/>
    <property type="gene ID" value="C5_04060C_A"/>
</dbReference>
<dbReference type="GeneID" id="3647733"/>
<dbReference type="KEGG" id="cal:CAALFM_C504060CA"/>
<dbReference type="CGD" id="CAL0000200852">
    <property type="gene designation" value="MEC1"/>
</dbReference>
<dbReference type="VEuPathDB" id="FungiDB:C5_04060C_A"/>
<dbReference type="eggNOG" id="KOG0890">
    <property type="taxonomic scope" value="Eukaryota"/>
</dbReference>
<dbReference type="HOGENOM" id="CLU_000178_4_0_1"/>
<dbReference type="InParanoid" id="Q59LR2"/>
<dbReference type="OrthoDB" id="381190at2759"/>
<dbReference type="PRO" id="PR:Q59LR2"/>
<dbReference type="Proteomes" id="UP000000559">
    <property type="component" value="Chromosome 5"/>
</dbReference>
<dbReference type="GO" id="GO:0005694">
    <property type="term" value="C:chromosome"/>
    <property type="evidence" value="ECO:0000318"/>
    <property type="project" value="GO_Central"/>
</dbReference>
<dbReference type="GO" id="GO:0005634">
    <property type="term" value="C:nucleus"/>
    <property type="evidence" value="ECO:0000318"/>
    <property type="project" value="GO_Central"/>
</dbReference>
<dbReference type="GO" id="GO:0005524">
    <property type="term" value="F:ATP binding"/>
    <property type="evidence" value="ECO:0007669"/>
    <property type="project" value="UniProtKB-KW"/>
</dbReference>
<dbReference type="GO" id="GO:0106310">
    <property type="term" value="F:protein serine kinase activity"/>
    <property type="evidence" value="ECO:0007669"/>
    <property type="project" value="RHEA"/>
</dbReference>
<dbReference type="GO" id="GO:0004674">
    <property type="term" value="F:protein serine/threonine kinase activity"/>
    <property type="evidence" value="ECO:0000318"/>
    <property type="project" value="GO_Central"/>
</dbReference>
<dbReference type="GO" id="GO:0000045">
    <property type="term" value="P:autophagosome assembly"/>
    <property type="evidence" value="ECO:0000315"/>
    <property type="project" value="CGD"/>
</dbReference>
<dbReference type="GO" id="GO:0006325">
    <property type="term" value="P:chromatin organization"/>
    <property type="evidence" value="ECO:0007669"/>
    <property type="project" value="UniProtKB-KW"/>
</dbReference>
<dbReference type="GO" id="GO:0051276">
    <property type="term" value="P:chromosome organization"/>
    <property type="evidence" value="ECO:0000315"/>
    <property type="project" value="CGD"/>
</dbReference>
<dbReference type="GO" id="GO:0000077">
    <property type="term" value="P:DNA damage checkpoint signaling"/>
    <property type="evidence" value="ECO:0000318"/>
    <property type="project" value="GO_Central"/>
</dbReference>
<dbReference type="GO" id="GO:0006281">
    <property type="term" value="P:DNA repair"/>
    <property type="evidence" value="ECO:0000318"/>
    <property type="project" value="GO_Central"/>
</dbReference>
<dbReference type="GO" id="GO:0044180">
    <property type="term" value="P:filamentous growth of a unicellular organism"/>
    <property type="evidence" value="ECO:0000315"/>
    <property type="project" value="CGD"/>
</dbReference>
<dbReference type="GO" id="GO:0051321">
    <property type="term" value="P:meiotic cell cycle"/>
    <property type="evidence" value="ECO:0007669"/>
    <property type="project" value="UniProtKB-KW"/>
</dbReference>
<dbReference type="GO" id="GO:0010506">
    <property type="term" value="P:regulation of autophagy"/>
    <property type="evidence" value="ECO:0000315"/>
    <property type="project" value="CGD"/>
</dbReference>
<dbReference type="GO" id="GO:0042770">
    <property type="term" value="P:signal transduction in response to DNA damage"/>
    <property type="evidence" value="ECO:0000315"/>
    <property type="project" value="CGD"/>
</dbReference>
<dbReference type="GO" id="GO:0044010">
    <property type="term" value="P:single-species biofilm formation"/>
    <property type="evidence" value="ECO:0000315"/>
    <property type="project" value="CGD"/>
</dbReference>
<dbReference type="GO" id="GO:0000723">
    <property type="term" value="P:telomere maintenance"/>
    <property type="evidence" value="ECO:0000318"/>
    <property type="project" value="GO_Central"/>
</dbReference>
<dbReference type="CDD" id="cd00892">
    <property type="entry name" value="PIKKc_ATR"/>
    <property type="match status" value="1"/>
</dbReference>
<dbReference type="FunFam" id="1.10.1070.11:FF:000033">
    <property type="entry name" value="Serine/threonine-protein kinase MEC1"/>
    <property type="match status" value="1"/>
</dbReference>
<dbReference type="Gene3D" id="1.10.1070.11">
    <property type="entry name" value="Phosphatidylinositol 3-/4-kinase, catalytic domain"/>
    <property type="match status" value="1"/>
</dbReference>
<dbReference type="Gene3D" id="3.30.1010.10">
    <property type="entry name" value="Phosphatidylinositol 3-kinase Catalytic Subunit, Chain A, domain 4"/>
    <property type="match status" value="1"/>
</dbReference>
<dbReference type="InterPro" id="IPR016024">
    <property type="entry name" value="ARM-type_fold"/>
</dbReference>
<dbReference type="InterPro" id="IPR056802">
    <property type="entry name" value="ATR-like_M-HEAT"/>
</dbReference>
<dbReference type="InterPro" id="IPR050517">
    <property type="entry name" value="DDR_Repair_Kinase"/>
</dbReference>
<dbReference type="InterPro" id="IPR003152">
    <property type="entry name" value="FATC_dom"/>
</dbReference>
<dbReference type="InterPro" id="IPR011009">
    <property type="entry name" value="Kinase-like_dom_sf"/>
</dbReference>
<dbReference type="InterPro" id="IPR000403">
    <property type="entry name" value="PI3/4_kinase_cat_dom"/>
</dbReference>
<dbReference type="InterPro" id="IPR036940">
    <property type="entry name" value="PI3/4_kinase_cat_sf"/>
</dbReference>
<dbReference type="InterPro" id="IPR018936">
    <property type="entry name" value="PI3/4_kinase_CS"/>
</dbReference>
<dbReference type="InterPro" id="IPR003151">
    <property type="entry name" value="PIK-rel_kinase_FAT"/>
</dbReference>
<dbReference type="InterPro" id="IPR014009">
    <property type="entry name" value="PIK_FAT"/>
</dbReference>
<dbReference type="InterPro" id="IPR012993">
    <property type="entry name" value="UME"/>
</dbReference>
<dbReference type="PANTHER" id="PTHR11139">
    <property type="entry name" value="ATAXIA TELANGIECTASIA MUTATED ATM -RELATED"/>
    <property type="match status" value="1"/>
</dbReference>
<dbReference type="PANTHER" id="PTHR11139:SF125">
    <property type="entry name" value="SERINE_THREONINE-PROTEIN KINASE MEC1"/>
    <property type="match status" value="1"/>
</dbReference>
<dbReference type="Pfam" id="PF02259">
    <property type="entry name" value="FAT"/>
    <property type="match status" value="1"/>
</dbReference>
<dbReference type="Pfam" id="PF02260">
    <property type="entry name" value="FATC"/>
    <property type="match status" value="1"/>
</dbReference>
<dbReference type="Pfam" id="PF23593">
    <property type="entry name" value="HEAT_ATR"/>
    <property type="match status" value="1"/>
</dbReference>
<dbReference type="Pfam" id="PF25030">
    <property type="entry name" value="M-HEAT_ATR"/>
    <property type="match status" value="1"/>
</dbReference>
<dbReference type="Pfam" id="PF00454">
    <property type="entry name" value="PI3_PI4_kinase"/>
    <property type="match status" value="1"/>
</dbReference>
<dbReference type="Pfam" id="PF08064">
    <property type="entry name" value="UME"/>
    <property type="match status" value="1"/>
</dbReference>
<dbReference type="SMART" id="SM01343">
    <property type="entry name" value="FATC"/>
    <property type="match status" value="1"/>
</dbReference>
<dbReference type="SMART" id="SM00146">
    <property type="entry name" value="PI3Kc"/>
    <property type="match status" value="1"/>
</dbReference>
<dbReference type="SMART" id="SM00802">
    <property type="entry name" value="UME"/>
    <property type="match status" value="1"/>
</dbReference>
<dbReference type="SUPFAM" id="SSF48371">
    <property type="entry name" value="ARM repeat"/>
    <property type="match status" value="1"/>
</dbReference>
<dbReference type="SUPFAM" id="SSF56112">
    <property type="entry name" value="Protein kinase-like (PK-like)"/>
    <property type="match status" value="1"/>
</dbReference>
<dbReference type="PROSITE" id="PS51189">
    <property type="entry name" value="FAT"/>
    <property type="match status" value="1"/>
</dbReference>
<dbReference type="PROSITE" id="PS51190">
    <property type="entry name" value="FATC"/>
    <property type="match status" value="1"/>
</dbReference>
<dbReference type="PROSITE" id="PS00916">
    <property type="entry name" value="PI3_4_KINASE_2"/>
    <property type="match status" value="1"/>
</dbReference>
<dbReference type="PROSITE" id="PS50290">
    <property type="entry name" value="PI3_4_KINASE_3"/>
    <property type="match status" value="1"/>
</dbReference>
<accession>Q59LR2</accession>
<accession>A0A1D8PNV7</accession>
<accession>Q59LQ3</accession>
<reference key="1">
    <citation type="journal article" date="2004" name="Proc. Natl. Acad. Sci. U.S.A.">
        <title>The diploid genome sequence of Candida albicans.</title>
        <authorList>
            <person name="Jones T."/>
            <person name="Federspiel N.A."/>
            <person name="Chibana H."/>
            <person name="Dungan J."/>
            <person name="Kalman S."/>
            <person name="Magee B.B."/>
            <person name="Newport G."/>
            <person name="Thorstenson Y.R."/>
            <person name="Agabian N."/>
            <person name="Magee P.T."/>
            <person name="Davis R.W."/>
            <person name="Scherer S."/>
        </authorList>
    </citation>
    <scope>NUCLEOTIDE SEQUENCE [LARGE SCALE GENOMIC DNA]</scope>
    <source>
        <strain>SC5314 / ATCC MYA-2876</strain>
    </source>
</reference>
<reference key="2">
    <citation type="journal article" date="2007" name="Genome Biol.">
        <title>Assembly of the Candida albicans genome into sixteen supercontigs aligned on the eight chromosomes.</title>
        <authorList>
            <person name="van het Hoog M."/>
            <person name="Rast T.J."/>
            <person name="Martchenko M."/>
            <person name="Grindle S."/>
            <person name="Dignard D."/>
            <person name="Hogues H."/>
            <person name="Cuomo C."/>
            <person name="Berriman M."/>
            <person name="Scherer S."/>
            <person name="Magee B.B."/>
            <person name="Whiteway M."/>
            <person name="Chibana H."/>
            <person name="Nantel A."/>
            <person name="Magee P.T."/>
        </authorList>
    </citation>
    <scope>GENOME REANNOTATION</scope>
    <source>
        <strain>SC5314 / ATCC MYA-2876</strain>
    </source>
</reference>
<reference key="3">
    <citation type="journal article" date="2013" name="Genome Biol.">
        <title>Assembly of a phased diploid Candida albicans genome facilitates allele-specific measurements and provides a simple model for repeat and indel structure.</title>
        <authorList>
            <person name="Muzzey D."/>
            <person name="Schwartz K."/>
            <person name="Weissman J.S."/>
            <person name="Sherlock G."/>
        </authorList>
    </citation>
    <scope>NUCLEOTIDE SEQUENCE [LARGE SCALE GENOMIC DNA]</scope>
    <scope>GENOME REANNOTATION</scope>
    <source>
        <strain>SC5314 / ATCC MYA-2876</strain>
    </source>
</reference>
<protein>
    <recommendedName>
        <fullName>Serine/threonine-protein kinase MEC1</fullName>
        <ecNumber>2.7.11.1</ecNumber>
    </recommendedName>
    <alternativeName>
        <fullName>ATR homolog</fullName>
    </alternativeName>
    <alternativeName>
        <fullName>DNA-damage checkpoint kinase MEC1</fullName>
    </alternativeName>
    <alternativeName>
        <fullName>Mitosis entry checkpoint protein 1</fullName>
    </alternativeName>
</protein>
<proteinExistence type="inferred from homology"/>
<gene>
    <name type="primary">MEC1</name>
    <name type="ordered locus">CAALFM_C504060CA</name>
    <name type="ORF">CaO19.1283</name>
    <name type="ORF">CaO19.8870</name>
</gene>
<comment type="function">
    <text evidence="1">Serine/threonine protein kinase which activates checkpoint signaling upon genotoxic stresses such as ionizing radiation (IR), ultraviolet light (UV), or DNA replication stalling, thereby acting as a DNA damage sensor. Recognizes the substrate consensus sequence [ST]-Q. Recruited to DNA lesions in order to initiate the DNA repair by homologous recombination. Phosphorylates histone H2A to form H2AS128ph (gamma-H2A) at sites of DNA damage, also involved in the regulation of DNA damage response mechanism. Required for cell growth and meiotic recombination (By similarity).</text>
</comment>
<comment type="catalytic activity">
    <reaction>
        <text>L-seryl-[protein] + ATP = O-phospho-L-seryl-[protein] + ADP + H(+)</text>
        <dbReference type="Rhea" id="RHEA:17989"/>
        <dbReference type="Rhea" id="RHEA-COMP:9863"/>
        <dbReference type="Rhea" id="RHEA-COMP:11604"/>
        <dbReference type="ChEBI" id="CHEBI:15378"/>
        <dbReference type="ChEBI" id="CHEBI:29999"/>
        <dbReference type="ChEBI" id="CHEBI:30616"/>
        <dbReference type="ChEBI" id="CHEBI:83421"/>
        <dbReference type="ChEBI" id="CHEBI:456216"/>
        <dbReference type="EC" id="2.7.11.1"/>
    </reaction>
</comment>
<comment type="catalytic activity">
    <reaction>
        <text>L-threonyl-[protein] + ATP = O-phospho-L-threonyl-[protein] + ADP + H(+)</text>
        <dbReference type="Rhea" id="RHEA:46608"/>
        <dbReference type="Rhea" id="RHEA-COMP:11060"/>
        <dbReference type="Rhea" id="RHEA-COMP:11605"/>
        <dbReference type="ChEBI" id="CHEBI:15378"/>
        <dbReference type="ChEBI" id="CHEBI:30013"/>
        <dbReference type="ChEBI" id="CHEBI:30616"/>
        <dbReference type="ChEBI" id="CHEBI:61977"/>
        <dbReference type="ChEBI" id="CHEBI:456216"/>
        <dbReference type="EC" id="2.7.11.1"/>
    </reaction>
</comment>
<comment type="subcellular location">
    <subcellularLocation>
        <location evidence="1">Nucleus</location>
    </subcellularLocation>
    <text evidence="1">Localizes to nuclear DNA repair foci in response to DNA double strand breaks.</text>
</comment>
<comment type="similarity">
    <text evidence="5">Belongs to the PI3/PI4-kinase family. ATM subfamily.</text>
</comment>
<feature type="chain" id="PRO_0000227709" description="Serine/threonine-protein kinase MEC1">
    <location>
        <begin position="1"/>
        <end position="2325"/>
    </location>
</feature>
<feature type="domain" description="FAT" evidence="3">
    <location>
        <begin position="1363"/>
        <end position="1886"/>
    </location>
</feature>
<feature type="domain" description="PI3K/PI4K catalytic" evidence="2">
    <location>
        <begin position="1993"/>
        <end position="2309"/>
    </location>
</feature>
<feature type="domain" description="FATC" evidence="3 4">
    <location>
        <begin position="2293"/>
        <end position="2325"/>
    </location>
</feature>
<feature type="region of interest" description="G-loop" evidence="2">
    <location>
        <begin position="1999"/>
        <end position="2005"/>
    </location>
</feature>
<feature type="region of interest" description="Catalytic loop" evidence="2">
    <location>
        <begin position="2174"/>
        <end position="2182"/>
    </location>
</feature>
<feature type="region of interest" description="Activation loop" evidence="2">
    <location>
        <begin position="2194"/>
        <end position="2218"/>
    </location>
</feature>
<keyword id="KW-0067">ATP-binding</keyword>
<keyword id="KW-0156">Chromatin regulator</keyword>
<keyword id="KW-0227">DNA damage</keyword>
<keyword id="KW-0234">DNA repair</keyword>
<keyword id="KW-0418">Kinase</keyword>
<keyword id="KW-0469">Meiosis</keyword>
<keyword id="KW-0547">Nucleotide-binding</keyword>
<keyword id="KW-0539">Nucleus</keyword>
<keyword id="KW-1185">Reference proteome</keyword>
<keyword id="KW-0723">Serine/threonine-protein kinase</keyword>
<keyword id="KW-0808">Transferase</keyword>